<feature type="chain" id="PRO_1000203761" description="Serine--tRNA ligase">
    <location>
        <begin position="1"/>
        <end position="424"/>
    </location>
</feature>
<feature type="binding site" evidence="1">
    <location>
        <begin position="233"/>
        <end position="235"/>
    </location>
    <ligand>
        <name>L-serine</name>
        <dbReference type="ChEBI" id="CHEBI:33384"/>
    </ligand>
</feature>
<feature type="binding site" evidence="1">
    <location>
        <begin position="264"/>
        <end position="266"/>
    </location>
    <ligand>
        <name>ATP</name>
        <dbReference type="ChEBI" id="CHEBI:30616"/>
    </ligand>
</feature>
<feature type="binding site" evidence="1">
    <location>
        <position position="280"/>
    </location>
    <ligand>
        <name>ATP</name>
        <dbReference type="ChEBI" id="CHEBI:30616"/>
    </ligand>
</feature>
<feature type="binding site" evidence="1">
    <location>
        <position position="287"/>
    </location>
    <ligand>
        <name>L-serine</name>
        <dbReference type="ChEBI" id="CHEBI:33384"/>
    </ligand>
</feature>
<feature type="binding site" evidence="1">
    <location>
        <begin position="351"/>
        <end position="354"/>
    </location>
    <ligand>
        <name>ATP</name>
        <dbReference type="ChEBI" id="CHEBI:30616"/>
    </ligand>
</feature>
<feature type="binding site" evidence="1">
    <location>
        <position position="386"/>
    </location>
    <ligand>
        <name>L-serine</name>
        <dbReference type="ChEBI" id="CHEBI:33384"/>
    </ligand>
</feature>
<comment type="function">
    <text evidence="1">Catalyzes the attachment of serine to tRNA(Ser). Is also able to aminoacylate tRNA(Sec) with serine, to form the misacylated tRNA L-seryl-tRNA(Sec), which will be further converted into selenocysteinyl-tRNA(Sec).</text>
</comment>
<comment type="catalytic activity">
    <reaction evidence="1">
        <text>tRNA(Ser) + L-serine + ATP = L-seryl-tRNA(Ser) + AMP + diphosphate + H(+)</text>
        <dbReference type="Rhea" id="RHEA:12292"/>
        <dbReference type="Rhea" id="RHEA-COMP:9669"/>
        <dbReference type="Rhea" id="RHEA-COMP:9703"/>
        <dbReference type="ChEBI" id="CHEBI:15378"/>
        <dbReference type="ChEBI" id="CHEBI:30616"/>
        <dbReference type="ChEBI" id="CHEBI:33019"/>
        <dbReference type="ChEBI" id="CHEBI:33384"/>
        <dbReference type="ChEBI" id="CHEBI:78442"/>
        <dbReference type="ChEBI" id="CHEBI:78533"/>
        <dbReference type="ChEBI" id="CHEBI:456215"/>
        <dbReference type="EC" id="6.1.1.11"/>
    </reaction>
</comment>
<comment type="catalytic activity">
    <reaction evidence="1">
        <text>tRNA(Sec) + L-serine + ATP = L-seryl-tRNA(Sec) + AMP + diphosphate + H(+)</text>
        <dbReference type="Rhea" id="RHEA:42580"/>
        <dbReference type="Rhea" id="RHEA-COMP:9742"/>
        <dbReference type="Rhea" id="RHEA-COMP:10128"/>
        <dbReference type="ChEBI" id="CHEBI:15378"/>
        <dbReference type="ChEBI" id="CHEBI:30616"/>
        <dbReference type="ChEBI" id="CHEBI:33019"/>
        <dbReference type="ChEBI" id="CHEBI:33384"/>
        <dbReference type="ChEBI" id="CHEBI:78442"/>
        <dbReference type="ChEBI" id="CHEBI:78533"/>
        <dbReference type="ChEBI" id="CHEBI:456215"/>
        <dbReference type="EC" id="6.1.1.11"/>
    </reaction>
</comment>
<comment type="pathway">
    <text evidence="1">Aminoacyl-tRNA biosynthesis; selenocysteinyl-tRNA(Sec) biosynthesis; L-seryl-tRNA(Sec) from L-serine and tRNA(Sec): step 1/1.</text>
</comment>
<comment type="subunit">
    <text evidence="1">Homodimer. The tRNA molecule binds across the dimer.</text>
</comment>
<comment type="subcellular location">
    <subcellularLocation>
        <location evidence="1">Cytoplasm</location>
    </subcellularLocation>
</comment>
<comment type="domain">
    <text evidence="1">Consists of two distinct domains, a catalytic core and a N-terminal extension that is involved in tRNA binding.</text>
</comment>
<comment type="similarity">
    <text evidence="1">Belongs to the class-II aminoacyl-tRNA synthetase family. Type-1 seryl-tRNA synthetase subfamily.</text>
</comment>
<gene>
    <name evidence="1" type="primary">serS</name>
    <name type="ordered locus">Kole_0854</name>
</gene>
<organism>
    <name type="scientific">Kosmotoga olearia (strain ATCC BAA-1733 / DSM 21960 / TBF 19.5.1)</name>
    <dbReference type="NCBI Taxonomy" id="521045"/>
    <lineage>
        <taxon>Bacteria</taxon>
        <taxon>Thermotogati</taxon>
        <taxon>Thermotogota</taxon>
        <taxon>Thermotogae</taxon>
        <taxon>Kosmotogales</taxon>
        <taxon>Kosmotogaceae</taxon>
        <taxon>Kosmotoga</taxon>
    </lineage>
</organism>
<proteinExistence type="inferred from homology"/>
<dbReference type="EC" id="6.1.1.11" evidence="1"/>
<dbReference type="EMBL" id="CP001634">
    <property type="protein sequence ID" value="ACR79564.1"/>
    <property type="molecule type" value="Genomic_DNA"/>
</dbReference>
<dbReference type="RefSeq" id="WP_015868226.1">
    <property type="nucleotide sequence ID" value="NC_012785.1"/>
</dbReference>
<dbReference type="SMR" id="C5CGC3"/>
<dbReference type="STRING" id="521045.Kole_0854"/>
<dbReference type="KEGG" id="kol:Kole_0854"/>
<dbReference type="eggNOG" id="COG0172">
    <property type="taxonomic scope" value="Bacteria"/>
</dbReference>
<dbReference type="HOGENOM" id="CLU_023797_1_1_0"/>
<dbReference type="OrthoDB" id="9804647at2"/>
<dbReference type="UniPathway" id="UPA00906">
    <property type="reaction ID" value="UER00895"/>
</dbReference>
<dbReference type="Proteomes" id="UP000002382">
    <property type="component" value="Chromosome"/>
</dbReference>
<dbReference type="GO" id="GO:0005737">
    <property type="term" value="C:cytoplasm"/>
    <property type="evidence" value="ECO:0007669"/>
    <property type="project" value="UniProtKB-SubCell"/>
</dbReference>
<dbReference type="GO" id="GO:0005524">
    <property type="term" value="F:ATP binding"/>
    <property type="evidence" value="ECO:0007669"/>
    <property type="project" value="UniProtKB-UniRule"/>
</dbReference>
<dbReference type="GO" id="GO:0004828">
    <property type="term" value="F:serine-tRNA ligase activity"/>
    <property type="evidence" value="ECO:0007669"/>
    <property type="project" value="UniProtKB-UniRule"/>
</dbReference>
<dbReference type="GO" id="GO:0016260">
    <property type="term" value="P:selenocysteine biosynthetic process"/>
    <property type="evidence" value="ECO:0007669"/>
    <property type="project" value="UniProtKB-UniRule"/>
</dbReference>
<dbReference type="GO" id="GO:0006434">
    <property type="term" value="P:seryl-tRNA aminoacylation"/>
    <property type="evidence" value="ECO:0007669"/>
    <property type="project" value="UniProtKB-UniRule"/>
</dbReference>
<dbReference type="CDD" id="cd00770">
    <property type="entry name" value="SerRS_core"/>
    <property type="match status" value="1"/>
</dbReference>
<dbReference type="Gene3D" id="3.30.930.10">
    <property type="entry name" value="Bira Bifunctional Protein, Domain 2"/>
    <property type="match status" value="1"/>
</dbReference>
<dbReference type="Gene3D" id="1.10.287.40">
    <property type="entry name" value="Serine-tRNA synthetase, tRNA binding domain"/>
    <property type="match status" value="1"/>
</dbReference>
<dbReference type="HAMAP" id="MF_00176">
    <property type="entry name" value="Ser_tRNA_synth_type1"/>
    <property type="match status" value="1"/>
</dbReference>
<dbReference type="InterPro" id="IPR002314">
    <property type="entry name" value="aa-tRNA-synt_IIb"/>
</dbReference>
<dbReference type="InterPro" id="IPR006195">
    <property type="entry name" value="aa-tRNA-synth_II"/>
</dbReference>
<dbReference type="InterPro" id="IPR045864">
    <property type="entry name" value="aa-tRNA-synth_II/BPL/LPL"/>
</dbReference>
<dbReference type="InterPro" id="IPR002317">
    <property type="entry name" value="Ser-tRNA-ligase_type_1"/>
</dbReference>
<dbReference type="InterPro" id="IPR015866">
    <property type="entry name" value="Ser-tRNA-synth_1_N"/>
</dbReference>
<dbReference type="InterPro" id="IPR042103">
    <property type="entry name" value="SerRS_1_N_sf"/>
</dbReference>
<dbReference type="InterPro" id="IPR033729">
    <property type="entry name" value="SerRS_core"/>
</dbReference>
<dbReference type="InterPro" id="IPR010978">
    <property type="entry name" value="tRNA-bd_arm"/>
</dbReference>
<dbReference type="NCBIfam" id="TIGR00414">
    <property type="entry name" value="serS"/>
    <property type="match status" value="1"/>
</dbReference>
<dbReference type="PANTHER" id="PTHR43697:SF1">
    <property type="entry name" value="SERINE--TRNA LIGASE"/>
    <property type="match status" value="1"/>
</dbReference>
<dbReference type="PANTHER" id="PTHR43697">
    <property type="entry name" value="SERYL-TRNA SYNTHETASE"/>
    <property type="match status" value="1"/>
</dbReference>
<dbReference type="Pfam" id="PF02403">
    <property type="entry name" value="Seryl_tRNA_N"/>
    <property type="match status" value="1"/>
</dbReference>
<dbReference type="Pfam" id="PF00587">
    <property type="entry name" value="tRNA-synt_2b"/>
    <property type="match status" value="1"/>
</dbReference>
<dbReference type="PIRSF" id="PIRSF001529">
    <property type="entry name" value="Ser-tRNA-synth_IIa"/>
    <property type="match status" value="1"/>
</dbReference>
<dbReference type="PRINTS" id="PR00981">
    <property type="entry name" value="TRNASYNTHSER"/>
</dbReference>
<dbReference type="SUPFAM" id="SSF55681">
    <property type="entry name" value="Class II aaRS and biotin synthetases"/>
    <property type="match status" value="1"/>
</dbReference>
<dbReference type="SUPFAM" id="SSF46589">
    <property type="entry name" value="tRNA-binding arm"/>
    <property type="match status" value="1"/>
</dbReference>
<dbReference type="PROSITE" id="PS50862">
    <property type="entry name" value="AA_TRNA_LIGASE_II"/>
    <property type="match status" value="1"/>
</dbReference>
<name>SYS_KOSOT</name>
<keyword id="KW-0030">Aminoacyl-tRNA synthetase</keyword>
<keyword id="KW-0067">ATP-binding</keyword>
<keyword id="KW-0963">Cytoplasm</keyword>
<keyword id="KW-0436">Ligase</keyword>
<keyword id="KW-0547">Nucleotide-binding</keyword>
<keyword id="KW-0648">Protein biosynthesis</keyword>
<keyword id="KW-1185">Reference proteome</keyword>
<sequence length="424" mass="48523">MIDIRLVRENPEKIRAALKNRCVDESILDELLELDKARREAISTSDRKKAERNKISSQIAKAKASGDEALAKELMEKAKDISVEVKELSEKAKKLDEEMRNKLLYIPNIPHESVPVGESEEDNVVVRKWGEPRQFDFDSLAHWDLGPNLGMMDFERAAKLSGSRFVILRKELARLERALINFMLDLHTREHGYEEVALPHLVKRETMQATGQLPKFEEEAYKTDPDDMFLIPTAEVPLVAQHRDEILNLNELPRKYTAYTPCYRREAGSYGKDVKGMIRVHQFDKVELVWFVHPDESYEALEKLTADAEEVLKRLGLPYRVVALCTGDLGFAAAKTYDIEVWLPSYNAYKEISSCSNVEDFQARRGNMRFRDKDNKLKYVHTLNGSGLAVGRTLVAIVENYQLPDGRIRVPEVLVPYMGTEVIG</sequence>
<evidence type="ECO:0000255" key="1">
    <source>
        <dbReference type="HAMAP-Rule" id="MF_00176"/>
    </source>
</evidence>
<protein>
    <recommendedName>
        <fullName evidence="1">Serine--tRNA ligase</fullName>
        <ecNumber evidence="1">6.1.1.11</ecNumber>
    </recommendedName>
    <alternativeName>
        <fullName evidence="1">Seryl-tRNA synthetase</fullName>
        <shortName evidence="1">SerRS</shortName>
    </alternativeName>
    <alternativeName>
        <fullName evidence="1">Seryl-tRNA(Ser/Sec) synthetase</fullName>
    </alternativeName>
</protein>
<reference key="1">
    <citation type="submission" date="2009-06" db="EMBL/GenBank/DDBJ databases">
        <title>Complete sequence of Thermotogales bacterium TBF 19.5.1.</title>
        <authorList>
            <consortium name="US DOE Joint Genome Institute"/>
            <person name="Lucas S."/>
            <person name="Copeland A."/>
            <person name="Lapidus A."/>
            <person name="Glavina del Rio T."/>
            <person name="Tice H."/>
            <person name="Bruce D."/>
            <person name="Goodwin L."/>
            <person name="Pitluck S."/>
            <person name="Chertkov O."/>
            <person name="Brettin T."/>
            <person name="Detter J.C."/>
            <person name="Han C."/>
            <person name="Schmutz J."/>
            <person name="Larimer F."/>
            <person name="Land M."/>
            <person name="Hauser L."/>
            <person name="Kyrpides N."/>
            <person name="Ovchinnikova G."/>
            <person name="Noll K."/>
        </authorList>
    </citation>
    <scope>NUCLEOTIDE SEQUENCE [LARGE SCALE GENOMIC DNA]</scope>
    <source>
        <strain>ATCC BAA-1733 / DSM 21960 / TBF 19.5.1</strain>
    </source>
</reference>
<accession>C5CGC3</accession>